<proteinExistence type="inferred from homology"/>
<evidence type="ECO:0000255" key="1">
    <source>
        <dbReference type="HAMAP-Rule" id="MF_00160"/>
    </source>
</evidence>
<name>SERC_ESCF3</name>
<protein>
    <recommendedName>
        <fullName evidence="1">Phosphoserine aminotransferase</fullName>
        <ecNumber evidence="1">2.6.1.52</ecNumber>
    </recommendedName>
    <alternativeName>
        <fullName evidence="1">Phosphohydroxythreonine aminotransferase</fullName>
        <shortName evidence="1">PSAT</shortName>
    </alternativeName>
</protein>
<organism>
    <name type="scientific">Escherichia fergusonii (strain ATCC 35469 / DSM 13698 / CCUG 18766 / IAM 14443 / JCM 21226 / LMG 7866 / NBRC 102419 / NCTC 12128 / CDC 0568-73)</name>
    <dbReference type="NCBI Taxonomy" id="585054"/>
    <lineage>
        <taxon>Bacteria</taxon>
        <taxon>Pseudomonadati</taxon>
        <taxon>Pseudomonadota</taxon>
        <taxon>Gammaproteobacteria</taxon>
        <taxon>Enterobacterales</taxon>
        <taxon>Enterobacteriaceae</taxon>
        <taxon>Escherichia</taxon>
    </lineage>
</organism>
<feature type="chain" id="PRO_1000203539" description="Phosphoserine aminotransferase">
    <location>
        <begin position="1"/>
        <end position="362"/>
    </location>
</feature>
<feature type="binding site" evidence="1">
    <location>
        <position position="9"/>
    </location>
    <ligand>
        <name>L-glutamate</name>
        <dbReference type="ChEBI" id="CHEBI:29985"/>
    </ligand>
</feature>
<feature type="binding site" evidence="1">
    <location>
        <position position="42"/>
    </location>
    <ligand>
        <name>L-glutamate</name>
        <dbReference type="ChEBI" id="CHEBI:29985"/>
    </ligand>
</feature>
<feature type="binding site" evidence="1">
    <location>
        <begin position="76"/>
        <end position="77"/>
    </location>
    <ligand>
        <name>pyridoxal 5'-phosphate</name>
        <dbReference type="ChEBI" id="CHEBI:597326"/>
    </ligand>
</feature>
<feature type="binding site" evidence="1">
    <location>
        <position position="102"/>
    </location>
    <ligand>
        <name>pyridoxal 5'-phosphate</name>
        <dbReference type="ChEBI" id="CHEBI:597326"/>
    </ligand>
</feature>
<feature type="binding site" evidence="1">
    <location>
        <position position="153"/>
    </location>
    <ligand>
        <name>pyridoxal 5'-phosphate</name>
        <dbReference type="ChEBI" id="CHEBI:597326"/>
    </ligand>
</feature>
<feature type="binding site" evidence="1">
    <location>
        <position position="174"/>
    </location>
    <ligand>
        <name>pyridoxal 5'-phosphate</name>
        <dbReference type="ChEBI" id="CHEBI:597326"/>
    </ligand>
</feature>
<feature type="binding site" evidence="1">
    <location>
        <position position="197"/>
    </location>
    <ligand>
        <name>pyridoxal 5'-phosphate</name>
        <dbReference type="ChEBI" id="CHEBI:597326"/>
    </ligand>
</feature>
<feature type="binding site" evidence="1">
    <location>
        <begin position="239"/>
        <end position="240"/>
    </location>
    <ligand>
        <name>pyridoxal 5'-phosphate</name>
        <dbReference type="ChEBI" id="CHEBI:597326"/>
    </ligand>
</feature>
<feature type="modified residue" description="N6-(pyridoxal phosphate)lysine" evidence="1">
    <location>
        <position position="198"/>
    </location>
</feature>
<sequence length="362" mass="39720">MAQVFNFSSGPAMLPADVLKQAQQELCDWNGLGTSVMEISHRGKEFIKVAEEAEHDFRELLNVPSNYKVLFCHGGGRGQFAAVPLNILGDKTTADYVDAGYWAASAIKEAKKYCTPNVFDAKVTVDGLRAVKPMREWQLSDNAAYLHYCPNETIDGIAIDETPDFGNEVVVAADFSSTILSRPIDVSRYGVIYAGAQKNIGPAGLTIVIVREDLLGKANIACPSILDYSILNDNDSMFNTPPTFAWYLSGLVFKWLKANGGVAAMDKINQQKAELLYGAIDNSDFYRNDVAKANRSRMNVPFQLADNALDKLFLEESFAAGLHALKGHRVVGGMRASIYNAMPLEGVIALTDFMADFERRHG</sequence>
<reference key="1">
    <citation type="journal article" date="2009" name="PLoS Genet.">
        <title>Organised genome dynamics in the Escherichia coli species results in highly diverse adaptive paths.</title>
        <authorList>
            <person name="Touchon M."/>
            <person name="Hoede C."/>
            <person name="Tenaillon O."/>
            <person name="Barbe V."/>
            <person name="Baeriswyl S."/>
            <person name="Bidet P."/>
            <person name="Bingen E."/>
            <person name="Bonacorsi S."/>
            <person name="Bouchier C."/>
            <person name="Bouvet O."/>
            <person name="Calteau A."/>
            <person name="Chiapello H."/>
            <person name="Clermont O."/>
            <person name="Cruveiller S."/>
            <person name="Danchin A."/>
            <person name="Diard M."/>
            <person name="Dossat C."/>
            <person name="Karoui M.E."/>
            <person name="Frapy E."/>
            <person name="Garry L."/>
            <person name="Ghigo J.M."/>
            <person name="Gilles A.M."/>
            <person name="Johnson J."/>
            <person name="Le Bouguenec C."/>
            <person name="Lescat M."/>
            <person name="Mangenot S."/>
            <person name="Martinez-Jehanne V."/>
            <person name="Matic I."/>
            <person name="Nassif X."/>
            <person name="Oztas S."/>
            <person name="Petit M.A."/>
            <person name="Pichon C."/>
            <person name="Rouy Z."/>
            <person name="Ruf C.S."/>
            <person name="Schneider D."/>
            <person name="Tourret J."/>
            <person name="Vacherie B."/>
            <person name="Vallenet D."/>
            <person name="Medigue C."/>
            <person name="Rocha E.P.C."/>
            <person name="Denamur E."/>
        </authorList>
    </citation>
    <scope>NUCLEOTIDE SEQUENCE [LARGE SCALE GENOMIC DNA]</scope>
    <source>
        <strain>ATCC 35469 / DSM 13698 / BCRC 15582 / CCUG 18766 / IAM 14443 / JCM 21226 / LMG 7866 / NBRC 102419 / NCTC 12128 / CDC 0568-73</strain>
    </source>
</reference>
<dbReference type="EC" id="2.6.1.52" evidence="1"/>
<dbReference type="EMBL" id="CU928158">
    <property type="protein sequence ID" value="CAQ88581.1"/>
    <property type="molecule type" value="Genomic_DNA"/>
</dbReference>
<dbReference type="RefSeq" id="WP_000079581.1">
    <property type="nucleotide sequence ID" value="NC_011740.1"/>
</dbReference>
<dbReference type="SMR" id="B7LN70"/>
<dbReference type="GeneID" id="75057897"/>
<dbReference type="KEGG" id="efe:EFER_1052"/>
<dbReference type="HOGENOM" id="CLU_034866_0_2_6"/>
<dbReference type="OrthoDB" id="9809412at2"/>
<dbReference type="UniPathway" id="UPA00135">
    <property type="reaction ID" value="UER00197"/>
</dbReference>
<dbReference type="UniPathway" id="UPA00244">
    <property type="reaction ID" value="UER00311"/>
</dbReference>
<dbReference type="Proteomes" id="UP000000745">
    <property type="component" value="Chromosome"/>
</dbReference>
<dbReference type="GO" id="GO:0005737">
    <property type="term" value="C:cytoplasm"/>
    <property type="evidence" value="ECO:0007669"/>
    <property type="project" value="UniProtKB-SubCell"/>
</dbReference>
<dbReference type="GO" id="GO:0004648">
    <property type="term" value="F:O-phospho-L-serine:2-oxoglutarate aminotransferase activity"/>
    <property type="evidence" value="ECO:0007669"/>
    <property type="project" value="UniProtKB-UniRule"/>
</dbReference>
<dbReference type="GO" id="GO:0030170">
    <property type="term" value="F:pyridoxal phosphate binding"/>
    <property type="evidence" value="ECO:0007669"/>
    <property type="project" value="UniProtKB-UniRule"/>
</dbReference>
<dbReference type="GO" id="GO:0006564">
    <property type="term" value="P:L-serine biosynthetic process"/>
    <property type="evidence" value="ECO:0007669"/>
    <property type="project" value="UniProtKB-UniRule"/>
</dbReference>
<dbReference type="GO" id="GO:0008615">
    <property type="term" value="P:pyridoxine biosynthetic process"/>
    <property type="evidence" value="ECO:0007669"/>
    <property type="project" value="UniProtKB-UniRule"/>
</dbReference>
<dbReference type="CDD" id="cd00611">
    <property type="entry name" value="PSAT_like"/>
    <property type="match status" value="1"/>
</dbReference>
<dbReference type="FunFam" id="3.40.640.10:FF:000010">
    <property type="entry name" value="Phosphoserine aminotransferase"/>
    <property type="match status" value="1"/>
</dbReference>
<dbReference type="FunFam" id="3.90.1150.10:FF:000006">
    <property type="entry name" value="Phosphoserine aminotransferase"/>
    <property type="match status" value="1"/>
</dbReference>
<dbReference type="Gene3D" id="3.90.1150.10">
    <property type="entry name" value="Aspartate Aminotransferase, domain 1"/>
    <property type="match status" value="1"/>
</dbReference>
<dbReference type="Gene3D" id="3.40.640.10">
    <property type="entry name" value="Type I PLP-dependent aspartate aminotransferase-like (Major domain)"/>
    <property type="match status" value="1"/>
</dbReference>
<dbReference type="HAMAP" id="MF_00160">
    <property type="entry name" value="SerC_aminotrans_5"/>
    <property type="match status" value="1"/>
</dbReference>
<dbReference type="InterPro" id="IPR000192">
    <property type="entry name" value="Aminotrans_V_dom"/>
</dbReference>
<dbReference type="InterPro" id="IPR020578">
    <property type="entry name" value="Aminotrans_V_PyrdxlP_BS"/>
</dbReference>
<dbReference type="InterPro" id="IPR022278">
    <property type="entry name" value="Pser_aminoTfrase"/>
</dbReference>
<dbReference type="InterPro" id="IPR015424">
    <property type="entry name" value="PyrdxlP-dep_Trfase"/>
</dbReference>
<dbReference type="InterPro" id="IPR015421">
    <property type="entry name" value="PyrdxlP-dep_Trfase_major"/>
</dbReference>
<dbReference type="InterPro" id="IPR015422">
    <property type="entry name" value="PyrdxlP-dep_Trfase_small"/>
</dbReference>
<dbReference type="NCBIfam" id="NF003764">
    <property type="entry name" value="PRK05355.1"/>
    <property type="match status" value="1"/>
</dbReference>
<dbReference type="NCBIfam" id="TIGR01364">
    <property type="entry name" value="serC_1"/>
    <property type="match status" value="1"/>
</dbReference>
<dbReference type="PANTHER" id="PTHR43247">
    <property type="entry name" value="PHOSPHOSERINE AMINOTRANSFERASE"/>
    <property type="match status" value="1"/>
</dbReference>
<dbReference type="PANTHER" id="PTHR43247:SF1">
    <property type="entry name" value="PHOSPHOSERINE AMINOTRANSFERASE"/>
    <property type="match status" value="1"/>
</dbReference>
<dbReference type="Pfam" id="PF00266">
    <property type="entry name" value="Aminotran_5"/>
    <property type="match status" value="1"/>
</dbReference>
<dbReference type="PIRSF" id="PIRSF000525">
    <property type="entry name" value="SerC"/>
    <property type="match status" value="1"/>
</dbReference>
<dbReference type="SUPFAM" id="SSF53383">
    <property type="entry name" value="PLP-dependent transferases"/>
    <property type="match status" value="1"/>
</dbReference>
<dbReference type="PROSITE" id="PS00595">
    <property type="entry name" value="AA_TRANSFER_CLASS_5"/>
    <property type="match status" value="1"/>
</dbReference>
<accession>B7LN70</accession>
<gene>
    <name evidence="1" type="primary">serC</name>
    <name type="ordered locus">EFER_1052</name>
</gene>
<comment type="function">
    <text evidence="1">Catalyzes the reversible conversion of 3-phosphohydroxypyruvate to phosphoserine and of 3-hydroxy-2-oxo-4-phosphonooxybutanoate to phosphohydroxythreonine.</text>
</comment>
<comment type="catalytic activity">
    <reaction evidence="1">
        <text>O-phospho-L-serine + 2-oxoglutarate = 3-phosphooxypyruvate + L-glutamate</text>
        <dbReference type="Rhea" id="RHEA:14329"/>
        <dbReference type="ChEBI" id="CHEBI:16810"/>
        <dbReference type="ChEBI" id="CHEBI:18110"/>
        <dbReference type="ChEBI" id="CHEBI:29985"/>
        <dbReference type="ChEBI" id="CHEBI:57524"/>
        <dbReference type="EC" id="2.6.1.52"/>
    </reaction>
</comment>
<comment type="catalytic activity">
    <reaction evidence="1">
        <text>4-(phosphooxy)-L-threonine + 2-oxoglutarate = (R)-3-hydroxy-2-oxo-4-phosphooxybutanoate + L-glutamate</text>
        <dbReference type="Rhea" id="RHEA:16573"/>
        <dbReference type="ChEBI" id="CHEBI:16810"/>
        <dbReference type="ChEBI" id="CHEBI:29985"/>
        <dbReference type="ChEBI" id="CHEBI:58452"/>
        <dbReference type="ChEBI" id="CHEBI:58538"/>
        <dbReference type="EC" id="2.6.1.52"/>
    </reaction>
</comment>
<comment type="cofactor">
    <cofactor evidence="1">
        <name>pyridoxal 5'-phosphate</name>
        <dbReference type="ChEBI" id="CHEBI:597326"/>
    </cofactor>
    <text evidence="1">Binds 1 pyridoxal phosphate per subunit.</text>
</comment>
<comment type="pathway">
    <text evidence="1">Amino-acid biosynthesis; L-serine biosynthesis; L-serine from 3-phospho-D-glycerate: step 2/3.</text>
</comment>
<comment type="pathway">
    <text evidence="1">Cofactor biosynthesis; pyridoxine 5'-phosphate biosynthesis; pyridoxine 5'-phosphate from D-erythrose 4-phosphate: step 3/5.</text>
</comment>
<comment type="subunit">
    <text evidence="1">Homodimer.</text>
</comment>
<comment type="subcellular location">
    <subcellularLocation>
        <location evidence="1">Cytoplasm</location>
    </subcellularLocation>
</comment>
<comment type="similarity">
    <text evidence="1">Belongs to the class-V pyridoxal-phosphate-dependent aminotransferase family. SerC subfamily.</text>
</comment>
<keyword id="KW-0028">Amino-acid biosynthesis</keyword>
<keyword id="KW-0032">Aminotransferase</keyword>
<keyword id="KW-0963">Cytoplasm</keyword>
<keyword id="KW-0663">Pyridoxal phosphate</keyword>
<keyword id="KW-0664">Pyridoxine biosynthesis</keyword>
<keyword id="KW-0718">Serine biosynthesis</keyword>
<keyword id="KW-0808">Transferase</keyword>